<evidence type="ECO:0000255" key="1">
    <source>
        <dbReference type="HAMAP-Rule" id="MF_00313"/>
    </source>
</evidence>
<organism>
    <name type="scientific">Clostridium botulinum (strain Okra / Type B1)</name>
    <dbReference type="NCBI Taxonomy" id="498213"/>
    <lineage>
        <taxon>Bacteria</taxon>
        <taxon>Bacillati</taxon>
        <taxon>Bacillota</taxon>
        <taxon>Clostridia</taxon>
        <taxon>Eubacteriales</taxon>
        <taxon>Clostridiaceae</taxon>
        <taxon>Clostridium</taxon>
    </lineage>
</organism>
<protein>
    <recommendedName>
        <fullName evidence="1">Glutaminase</fullName>
        <ecNumber evidence="1">3.5.1.2</ecNumber>
    </recommendedName>
</protein>
<sequence length="305" mass="33286">MNRLLKTIIENNRKWISEGKVASYIPELSKMDKNLLGISVCTLGGEEYWEGDAEVKFTIQSISKIVTLMLAIIDNGEDYVFSKVGMEPTETAFNSIVNLEAKESHKPINPMINAGAIVVASMVAGKDSDEKFDRILKFTRKISGNNDIDINLNVYESEKETGHRNRALAYFMKSTGALKGNVEEILDVYFKQCSIEITCKDLARIGVMLANDGVSPYTGDRIVPRHVARIVKTIMVTCGMYDASGNFAVHIGIPAKSGVGGGIIACAPRRMGIGVLGTALDEKGNSIAGTKILEELSKQLDLSIF</sequence>
<name>GLSA_CLOBK</name>
<dbReference type="EC" id="3.5.1.2" evidence="1"/>
<dbReference type="EMBL" id="CP000939">
    <property type="protein sequence ID" value="ACA46530.1"/>
    <property type="molecule type" value="Genomic_DNA"/>
</dbReference>
<dbReference type="RefSeq" id="WP_003399984.1">
    <property type="nucleotide sequence ID" value="NC_010516.1"/>
</dbReference>
<dbReference type="SMR" id="B1IKM0"/>
<dbReference type="GeneID" id="5185637"/>
<dbReference type="KEGG" id="cbb:CLD_1766"/>
<dbReference type="HOGENOM" id="CLU_027932_1_0_9"/>
<dbReference type="Proteomes" id="UP000008541">
    <property type="component" value="Chromosome"/>
</dbReference>
<dbReference type="GO" id="GO:0004359">
    <property type="term" value="F:glutaminase activity"/>
    <property type="evidence" value="ECO:0007669"/>
    <property type="project" value="UniProtKB-UniRule"/>
</dbReference>
<dbReference type="GO" id="GO:0006537">
    <property type="term" value="P:glutamate biosynthetic process"/>
    <property type="evidence" value="ECO:0007669"/>
    <property type="project" value="TreeGrafter"/>
</dbReference>
<dbReference type="GO" id="GO:0006543">
    <property type="term" value="P:glutamine catabolic process"/>
    <property type="evidence" value="ECO:0007669"/>
    <property type="project" value="TreeGrafter"/>
</dbReference>
<dbReference type="FunFam" id="3.40.710.10:FF:000005">
    <property type="entry name" value="Glutaminase"/>
    <property type="match status" value="1"/>
</dbReference>
<dbReference type="Gene3D" id="3.40.710.10">
    <property type="entry name" value="DD-peptidase/beta-lactamase superfamily"/>
    <property type="match status" value="1"/>
</dbReference>
<dbReference type="HAMAP" id="MF_00313">
    <property type="entry name" value="Glutaminase"/>
    <property type="match status" value="1"/>
</dbReference>
<dbReference type="InterPro" id="IPR012338">
    <property type="entry name" value="Beta-lactam/transpept-like"/>
</dbReference>
<dbReference type="InterPro" id="IPR015868">
    <property type="entry name" value="Glutaminase"/>
</dbReference>
<dbReference type="NCBIfam" id="TIGR03814">
    <property type="entry name" value="Gln_ase"/>
    <property type="match status" value="1"/>
</dbReference>
<dbReference type="PANTHER" id="PTHR12544">
    <property type="entry name" value="GLUTAMINASE"/>
    <property type="match status" value="1"/>
</dbReference>
<dbReference type="PANTHER" id="PTHR12544:SF29">
    <property type="entry name" value="GLUTAMINASE"/>
    <property type="match status" value="1"/>
</dbReference>
<dbReference type="Pfam" id="PF04960">
    <property type="entry name" value="Glutaminase"/>
    <property type="match status" value="1"/>
</dbReference>
<dbReference type="SUPFAM" id="SSF56601">
    <property type="entry name" value="beta-lactamase/transpeptidase-like"/>
    <property type="match status" value="1"/>
</dbReference>
<gene>
    <name evidence="1" type="primary">glsA</name>
    <name type="ordered locus">CLD_1766</name>
</gene>
<accession>B1IKM0</accession>
<feature type="chain" id="PRO_1000115695" description="Glutaminase">
    <location>
        <begin position="1"/>
        <end position="305"/>
    </location>
</feature>
<feature type="binding site" evidence="1">
    <location>
        <position position="61"/>
    </location>
    <ligand>
        <name>substrate</name>
    </ligand>
</feature>
<feature type="binding site" evidence="1">
    <location>
        <position position="113"/>
    </location>
    <ligand>
        <name>substrate</name>
    </ligand>
</feature>
<feature type="binding site" evidence="1">
    <location>
        <position position="158"/>
    </location>
    <ligand>
        <name>substrate</name>
    </ligand>
</feature>
<feature type="binding site" evidence="1">
    <location>
        <position position="165"/>
    </location>
    <ligand>
        <name>substrate</name>
    </ligand>
</feature>
<feature type="binding site" evidence="1">
    <location>
        <position position="189"/>
    </location>
    <ligand>
        <name>substrate</name>
    </ligand>
</feature>
<feature type="binding site" evidence="1">
    <location>
        <position position="241"/>
    </location>
    <ligand>
        <name>substrate</name>
    </ligand>
</feature>
<feature type="binding site" evidence="1">
    <location>
        <position position="259"/>
    </location>
    <ligand>
        <name>substrate</name>
    </ligand>
</feature>
<comment type="catalytic activity">
    <reaction evidence="1">
        <text>L-glutamine + H2O = L-glutamate + NH4(+)</text>
        <dbReference type="Rhea" id="RHEA:15889"/>
        <dbReference type="ChEBI" id="CHEBI:15377"/>
        <dbReference type="ChEBI" id="CHEBI:28938"/>
        <dbReference type="ChEBI" id="CHEBI:29985"/>
        <dbReference type="ChEBI" id="CHEBI:58359"/>
        <dbReference type="EC" id="3.5.1.2"/>
    </reaction>
</comment>
<comment type="subunit">
    <text evidence="1">Homotetramer.</text>
</comment>
<comment type="similarity">
    <text evidence="1">Belongs to the glutaminase family.</text>
</comment>
<proteinExistence type="inferred from homology"/>
<reference key="1">
    <citation type="journal article" date="2007" name="PLoS ONE">
        <title>Analysis of the neurotoxin complex genes in Clostridium botulinum A1-A4 and B1 strains: BoNT/A3, /Ba4 and /B1 clusters are located within plasmids.</title>
        <authorList>
            <person name="Smith T.J."/>
            <person name="Hill K.K."/>
            <person name="Foley B.T."/>
            <person name="Detter J.C."/>
            <person name="Munk A.C."/>
            <person name="Bruce D.C."/>
            <person name="Doggett N.A."/>
            <person name="Smith L.A."/>
            <person name="Marks J.D."/>
            <person name="Xie G."/>
            <person name="Brettin T.S."/>
        </authorList>
    </citation>
    <scope>NUCLEOTIDE SEQUENCE [LARGE SCALE GENOMIC DNA]</scope>
    <source>
        <strain>Okra / Type B1</strain>
    </source>
</reference>
<keyword id="KW-0378">Hydrolase</keyword>